<sequence>MNGARIAFWPKKEQHQLFNLSFSAMMLALALIASFVSHFISIPFLSALKLTIDISSVFLIACAFFVSYSWALVITVALSLCSFIWDGNNWIGILTLTIANFAIVSFTRLYFHIFAQIKLRWLWVFSLATLSNTLLLTTLNGLLITPLYWYWFGYVPTANFVEVAKIYNKTPYFHFFLFGVPNYWGGIFALYSLFNVIKFTLVSLIGVPVMRAFQKFYWKKAQIVY</sequence>
<accession>P75251</accession>
<organism>
    <name type="scientific">Mycoplasma pneumoniae (strain ATCC 29342 / M129 / Subtype 1)</name>
    <name type="common">Mycoplasmoides pneumoniae</name>
    <dbReference type="NCBI Taxonomy" id="272634"/>
    <lineage>
        <taxon>Bacteria</taxon>
        <taxon>Bacillati</taxon>
        <taxon>Mycoplasmatota</taxon>
        <taxon>Mycoplasmoidales</taxon>
        <taxon>Mycoplasmoidaceae</taxon>
        <taxon>Mycoplasmoides</taxon>
    </lineage>
</organism>
<comment type="subcellular location">
    <subcellularLocation>
        <location evidence="2">Cell membrane</location>
        <topology evidence="2">Multi-pass membrane protein</topology>
    </subcellularLocation>
</comment>
<protein>
    <recommendedName>
        <fullName>Uncharacterized protein MG350.1 homolog</fullName>
    </recommendedName>
</protein>
<feature type="chain" id="PRO_0000210558" description="Uncharacterized protein MG350.1 homolog">
    <location>
        <begin position="1"/>
        <end position="225"/>
    </location>
</feature>
<feature type="transmembrane region" description="Helical" evidence="1">
    <location>
        <begin position="25"/>
        <end position="45"/>
    </location>
</feature>
<feature type="transmembrane region" description="Helical" evidence="1">
    <location>
        <begin position="57"/>
        <end position="77"/>
    </location>
</feature>
<feature type="transmembrane region" description="Helical" evidence="1">
    <location>
        <begin position="83"/>
        <end position="103"/>
    </location>
</feature>
<feature type="transmembrane region" description="Helical" evidence="1">
    <location>
        <begin position="109"/>
        <end position="129"/>
    </location>
</feature>
<feature type="transmembrane region" description="Helical" evidence="1">
    <location>
        <begin position="135"/>
        <end position="155"/>
    </location>
</feature>
<feature type="transmembrane region" description="Helical" evidence="1">
    <location>
        <begin position="187"/>
        <end position="207"/>
    </location>
</feature>
<proteinExistence type="predicted"/>
<dbReference type="EMBL" id="U00089">
    <property type="protein sequence ID" value="AAB95963.1"/>
    <property type="molecule type" value="Genomic_DNA"/>
</dbReference>
<dbReference type="PIR" id="S73641">
    <property type="entry name" value="S73641"/>
</dbReference>
<dbReference type="RefSeq" id="NP_110215.1">
    <property type="nucleotide sequence ID" value="NC_000912.1"/>
</dbReference>
<dbReference type="RefSeq" id="WP_010874883.1">
    <property type="nucleotide sequence ID" value="NZ_OU342337.1"/>
</dbReference>
<dbReference type="STRING" id="272634.MPN_527"/>
<dbReference type="EnsemblBacteria" id="AAB95963">
    <property type="protein sequence ID" value="AAB95963"/>
    <property type="gene ID" value="MPN_527"/>
</dbReference>
<dbReference type="KEGG" id="mpn:MPN_527"/>
<dbReference type="PATRIC" id="fig|272634.6.peg.586"/>
<dbReference type="HOGENOM" id="CLU_1228796_0_0_14"/>
<dbReference type="OrthoDB" id="401040at2"/>
<dbReference type="BioCyc" id="MPNE272634:G1GJ3-870-MONOMER"/>
<dbReference type="Proteomes" id="UP000000808">
    <property type="component" value="Chromosome"/>
</dbReference>
<dbReference type="GO" id="GO:0005886">
    <property type="term" value="C:plasma membrane"/>
    <property type="evidence" value="ECO:0007669"/>
    <property type="project" value="UniProtKB-SubCell"/>
</dbReference>
<dbReference type="Gene3D" id="1.10.1760.20">
    <property type="match status" value="1"/>
</dbReference>
<dbReference type="NCBIfam" id="NF046054">
    <property type="entry name" value="memb_MPN527"/>
    <property type="match status" value="1"/>
</dbReference>
<evidence type="ECO:0000255" key="1"/>
<evidence type="ECO:0000305" key="2"/>
<name>Y527_MYCPN</name>
<reference key="1">
    <citation type="journal article" date="1996" name="Nucleic Acids Res.">
        <title>Complete sequence analysis of the genome of the bacterium Mycoplasma pneumoniae.</title>
        <authorList>
            <person name="Himmelreich R."/>
            <person name="Hilbert H."/>
            <person name="Plagens H."/>
            <person name="Pirkl E."/>
            <person name="Li B.-C."/>
            <person name="Herrmann R."/>
        </authorList>
    </citation>
    <scope>NUCLEOTIDE SEQUENCE [LARGE SCALE GENOMIC DNA]</scope>
    <source>
        <strain>ATCC 29342 / M129 / Subtype 1</strain>
    </source>
</reference>
<keyword id="KW-1003">Cell membrane</keyword>
<keyword id="KW-0472">Membrane</keyword>
<keyword id="KW-1185">Reference proteome</keyword>
<keyword id="KW-0812">Transmembrane</keyword>
<keyword id="KW-1133">Transmembrane helix</keyword>
<gene>
    <name type="ordered locus">MPN_527</name>
    <name type="ORF">G12_orf225</name>
    <name type="ORF">MP315</name>
</gene>